<keyword id="KW-0963">Cytoplasm</keyword>
<keyword id="KW-0489">Methyltransferase</keyword>
<keyword id="KW-0698">rRNA processing</keyword>
<keyword id="KW-0949">S-adenosyl-L-methionine</keyword>
<keyword id="KW-0808">Transferase</keyword>
<protein>
    <recommendedName>
        <fullName evidence="1">Ribosomal RNA large subunit methyltransferase E</fullName>
        <ecNumber evidence="1">2.1.1.166</ecNumber>
    </recommendedName>
    <alternativeName>
        <fullName evidence="1">23S rRNA Um2552 methyltransferase</fullName>
    </alternativeName>
    <alternativeName>
        <fullName evidence="1">rRNA (uridine-2'-O-)-methyltransferase</fullName>
    </alternativeName>
</protein>
<organism>
    <name type="scientific">Brucella abortus biovar 1 (strain 9-941)</name>
    <dbReference type="NCBI Taxonomy" id="262698"/>
    <lineage>
        <taxon>Bacteria</taxon>
        <taxon>Pseudomonadati</taxon>
        <taxon>Pseudomonadota</taxon>
        <taxon>Alphaproteobacteria</taxon>
        <taxon>Hyphomicrobiales</taxon>
        <taxon>Brucellaceae</taxon>
        <taxon>Brucella/Ochrobactrum group</taxon>
        <taxon>Brucella</taxon>
    </lineage>
</organism>
<gene>
    <name evidence="1" type="primary">rlmE</name>
    <name evidence="1" type="synonym">ftsJ</name>
    <name evidence="1" type="synonym">rrmJ</name>
    <name type="ordered locus">BruAb2_0543</name>
</gene>
<name>RLME_BRUAB</name>
<accession>Q578H4</accession>
<feature type="chain" id="PRO_0000155478" description="Ribosomal RNA large subunit methyltransferase E">
    <location>
        <begin position="1"/>
        <end position="240"/>
    </location>
</feature>
<feature type="region of interest" description="Disordered" evidence="2">
    <location>
        <begin position="1"/>
        <end position="33"/>
    </location>
</feature>
<feature type="compositionally biased region" description="Gly residues" evidence="2">
    <location>
        <begin position="1"/>
        <end position="20"/>
    </location>
</feature>
<feature type="active site" description="Proton acceptor" evidence="1">
    <location>
        <position position="195"/>
    </location>
</feature>
<feature type="binding site" evidence="1">
    <location>
        <position position="92"/>
    </location>
    <ligand>
        <name>S-adenosyl-L-methionine</name>
        <dbReference type="ChEBI" id="CHEBI:59789"/>
    </ligand>
</feature>
<feature type="binding site" evidence="1">
    <location>
        <position position="94"/>
    </location>
    <ligand>
        <name>S-adenosyl-L-methionine</name>
        <dbReference type="ChEBI" id="CHEBI:59789"/>
    </ligand>
</feature>
<feature type="binding site" evidence="1">
    <location>
        <position position="115"/>
    </location>
    <ligand>
        <name>S-adenosyl-L-methionine</name>
        <dbReference type="ChEBI" id="CHEBI:59789"/>
    </ligand>
</feature>
<feature type="binding site" evidence="1">
    <location>
        <position position="131"/>
    </location>
    <ligand>
        <name>S-adenosyl-L-methionine</name>
        <dbReference type="ChEBI" id="CHEBI:59789"/>
    </ligand>
</feature>
<feature type="binding site" evidence="1">
    <location>
        <position position="155"/>
    </location>
    <ligand>
        <name>S-adenosyl-L-methionine</name>
        <dbReference type="ChEBI" id="CHEBI:59789"/>
    </ligand>
</feature>
<reference key="1">
    <citation type="journal article" date="2005" name="J. Bacteriol.">
        <title>Completion of the genome sequence of Brucella abortus and comparison to the highly similar genomes of Brucella melitensis and Brucella suis.</title>
        <authorList>
            <person name="Halling S.M."/>
            <person name="Peterson-Burch B.D."/>
            <person name="Bricker B.J."/>
            <person name="Zuerner R.L."/>
            <person name="Qing Z."/>
            <person name="Li L.-L."/>
            <person name="Kapur V."/>
            <person name="Alt D.P."/>
            <person name="Olsen S.C."/>
        </authorList>
    </citation>
    <scope>NUCLEOTIDE SEQUENCE [LARGE SCALE GENOMIC DNA]</scope>
    <source>
        <strain>9-941</strain>
    </source>
</reference>
<dbReference type="EC" id="2.1.1.166" evidence="1"/>
<dbReference type="EMBL" id="AE017224">
    <property type="protein sequence ID" value="AAX75960.1"/>
    <property type="status" value="ALT_INIT"/>
    <property type="molecule type" value="Genomic_DNA"/>
</dbReference>
<dbReference type="RefSeq" id="WP_002965955.1">
    <property type="nucleotide sequence ID" value="NC_006933.1"/>
</dbReference>
<dbReference type="SMR" id="Q578H4"/>
<dbReference type="EnsemblBacteria" id="AAX75960">
    <property type="protein sequence ID" value="AAX75960"/>
    <property type="gene ID" value="BruAb2_0543"/>
</dbReference>
<dbReference type="KEGG" id="bmb:BruAb2_0543"/>
<dbReference type="HOGENOM" id="CLU_009422_4_0_5"/>
<dbReference type="Proteomes" id="UP000000540">
    <property type="component" value="Chromosome II"/>
</dbReference>
<dbReference type="GO" id="GO:0005737">
    <property type="term" value="C:cytoplasm"/>
    <property type="evidence" value="ECO:0007669"/>
    <property type="project" value="UniProtKB-SubCell"/>
</dbReference>
<dbReference type="GO" id="GO:0008650">
    <property type="term" value="F:rRNA (uridine-2'-O-)-methyltransferase activity"/>
    <property type="evidence" value="ECO:0007669"/>
    <property type="project" value="UniProtKB-UniRule"/>
</dbReference>
<dbReference type="Gene3D" id="3.40.50.150">
    <property type="entry name" value="Vaccinia Virus protein VP39"/>
    <property type="match status" value="1"/>
</dbReference>
<dbReference type="HAMAP" id="MF_01547">
    <property type="entry name" value="RNA_methyltr_E"/>
    <property type="match status" value="1"/>
</dbReference>
<dbReference type="InterPro" id="IPR050082">
    <property type="entry name" value="RNA_methyltr_RlmE"/>
</dbReference>
<dbReference type="InterPro" id="IPR002877">
    <property type="entry name" value="RNA_MeTrfase_FtsJ_dom"/>
</dbReference>
<dbReference type="InterPro" id="IPR015507">
    <property type="entry name" value="rRNA-MeTfrase_E"/>
</dbReference>
<dbReference type="InterPro" id="IPR029063">
    <property type="entry name" value="SAM-dependent_MTases_sf"/>
</dbReference>
<dbReference type="PANTHER" id="PTHR10920">
    <property type="entry name" value="RIBOSOMAL RNA METHYLTRANSFERASE"/>
    <property type="match status" value="1"/>
</dbReference>
<dbReference type="PANTHER" id="PTHR10920:SF18">
    <property type="entry name" value="RRNA METHYLTRANSFERASE 2, MITOCHONDRIAL"/>
    <property type="match status" value="1"/>
</dbReference>
<dbReference type="Pfam" id="PF01728">
    <property type="entry name" value="FtsJ"/>
    <property type="match status" value="1"/>
</dbReference>
<dbReference type="PIRSF" id="PIRSF005461">
    <property type="entry name" value="23S_rRNA_mtase"/>
    <property type="match status" value="1"/>
</dbReference>
<dbReference type="SUPFAM" id="SSF53335">
    <property type="entry name" value="S-adenosyl-L-methionine-dependent methyltransferases"/>
    <property type="match status" value="1"/>
</dbReference>
<sequence>MSKAGGNKGGSRTGGRGGAGSSNLHVRVKKKAGTIKESSRRWLERHLNDPYVHKSRQDGYRSRAAYKLIEINDRYNLLKKGQKIIDLGAAPGGWSQIAARIVGSTDENPQVVGIDYLHVDPLPGVILLEMDFLDDEAPQKLMDALGDKPDLVISDMAAPTTGHRRTDHLRTVHLCEVAADFAVSVLKPGGHFLTKTFQGGTENELLALLKQKFRSVHHVKPPASRAESVELYLLARDFKG</sequence>
<comment type="function">
    <text evidence="1">Specifically methylates the uridine in position 2552 of 23S rRNA at the 2'-O position of the ribose in the fully assembled 50S ribosomal subunit.</text>
</comment>
<comment type="catalytic activity">
    <reaction evidence="1">
        <text>uridine(2552) in 23S rRNA + S-adenosyl-L-methionine = 2'-O-methyluridine(2552) in 23S rRNA + S-adenosyl-L-homocysteine + H(+)</text>
        <dbReference type="Rhea" id="RHEA:42720"/>
        <dbReference type="Rhea" id="RHEA-COMP:10202"/>
        <dbReference type="Rhea" id="RHEA-COMP:10203"/>
        <dbReference type="ChEBI" id="CHEBI:15378"/>
        <dbReference type="ChEBI" id="CHEBI:57856"/>
        <dbReference type="ChEBI" id="CHEBI:59789"/>
        <dbReference type="ChEBI" id="CHEBI:65315"/>
        <dbReference type="ChEBI" id="CHEBI:74478"/>
        <dbReference type="EC" id="2.1.1.166"/>
    </reaction>
</comment>
<comment type="subcellular location">
    <subcellularLocation>
        <location evidence="1">Cytoplasm</location>
    </subcellularLocation>
</comment>
<comment type="similarity">
    <text evidence="1">Belongs to the class I-like SAM-binding methyltransferase superfamily. RNA methyltransferase RlmE family.</text>
</comment>
<comment type="sequence caution" evidence="3">
    <conflict type="erroneous initiation">
        <sequence resource="EMBL-CDS" id="AAX75960"/>
    </conflict>
</comment>
<proteinExistence type="inferred from homology"/>
<evidence type="ECO:0000255" key="1">
    <source>
        <dbReference type="HAMAP-Rule" id="MF_01547"/>
    </source>
</evidence>
<evidence type="ECO:0000256" key="2">
    <source>
        <dbReference type="SAM" id="MobiDB-lite"/>
    </source>
</evidence>
<evidence type="ECO:0000305" key="3"/>